<protein>
    <recommendedName>
        <fullName>Venom nerve growth factor</fullName>
        <shortName>v-NGF</shortName>
        <shortName>vNGF</shortName>
    </recommendedName>
    <alternativeName>
        <fullName>Bj-NGF</fullName>
    </alternativeName>
</protein>
<accession>Q90W38</accession>
<organism>
    <name type="scientific">Bothrops jararacussu</name>
    <name type="common">Jararacussu</name>
    <dbReference type="NCBI Taxonomy" id="8726"/>
    <lineage>
        <taxon>Eukaryota</taxon>
        <taxon>Metazoa</taxon>
        <taxon>Chordata</taxon>
        <taxon>Craniata</taxon>
        <taxon>Vertebrata</taxon>
        <taxon>Euteleostomi</taxon>
        <taxon>Lepidosauria</taxon>
        <taxon>Squamata</taxon>
        <taxon>Bifurcata</taxon>
        <taxon>Unidentata</taxon>
        <taxon>Episquamata</taxon>
        <taxon>Toxicofera</taxon>
        <taxon>Serpentes</taxon>
        <taxon>Colubroidea</taxon>
        <taxon>Viperidae</taxon>
        <taxon>Crotalinae</taxon>
        <taxon>Bothrops</taxon>
    </lineage>
</organism>
<evidence type="ECO:0000250" key="1"/>
<evidence type="ECO:0000250" key="2">
    <source>
        <dbReference type="UniProtKB" id="P61898"/>
    </source>
</evidence>
<evidence type="ECO:0000250" key="3">
    <source>
        <dbReference type="UniProtKB" id="P61899"/>
    </source>
</evidence>
<evidence type="ECO:0000255" key="4"/>
<evidence type="ECO:0000256" key="5">
    <source>
        <dbReference type="SAM" id="MobiDB-lite"/>
    </source>
</evidence>
<evidence type="ECO:0000305" key="6"/>
<proteinExistence type="evidence at transcript level"/>
<gene>
    <name type="primary">NGF</name>
</gene>
<name>NGFV_BOTJR</name>
<keyword id="KW-0165">Cleavage on pair of basic residues</keyword>
<keyword id="KW-1015">Disulfide bond</keyword>
<keyword id="KW-0325">Glycoprotein</keyword>
<keyword id="KW-0339">Growth factor</keyword>
<keyword id="KW-0446">Lipid-binding</keyword>
<keyword id="KW-0481">Metalloenzyme inhibitor</keyword>
<keyword id="KW-0483">Metalloprotease inhibitor</keyword>
<keyword id="KW-0646">Protease inhibitor</keyword>
<keyword id="KW-0964">Secreted</keyword>
<keyword id="KW-0732">Signal</keyword>
<keyword id="KW-0800">Toxin</keyword>
<reference key="1">
    <citation type="journal article" date="2002" name="Biochimie">
        <title>cDNA sequence and molecular modeling of a nerve growth factor from Bothrops jararacussu venomous gland.</title>
        <authorList>
            <person name="Kashima S."/>
            <person name="Soares A.M."/>
            <person name="Roberto P.G."/>
            <person name="Pereira J.O."/>
            <person name="Astolfi-Filho S."/>
            <person name="Cintra A.O."/>
            <person name="Fontes M.R.M."/>
            <person name="Giglio J.R."/>
            <person name="de Castro Franca S."/>
        </authorList>
    </citation>
    <scope>NUCLEOTIDE SEQUENCE [MRNA]</scope>
    <scope>3D-STRUCTURE MODELING OF 123-241</scope>
    <source>
        <tissue>Venom gland</tissue>
    </source>
</reference>
<dbReference type="EMBL" id="AY007318">
    <property type="protein sequence ID" value="AAG12169.1"/>
    <property type="molecule type" value="mRNA"/>
</dbReference>
<dbReference type="SMR" id="Q90W38"/>
<dbReference type="GlyCosmos" id="Q90W38">
    <property type="glycosylation" value="1 site, No reported glycans"/>
</dbReference>
<dbReference type="GO" id="GO:0030424">
    <property type="term" value="C:axon"/>
    <property type="evidence" value="ECO:0007669"/>
    <property type="project" value="TreeGrafter"/>
</dbReference>
<dbReference type="GO" id="GO:0030425">
    <property type="term" value="C:dendrite"/>
    <property type="evidence" value="ECO:0007669"/>
    <property type="project" value="TreeGrafter"/>
</dbReference>
<dbReference type="GO" id="GO:0005615">
    <property type="term" value="C:extracellular space"/>
    <property type="evidence" value="ECO:0007669"/>
    <property type="project" value="TreeGrafter"/>
</dbReference>
<dbReference type="GO" id="GO:0008021">
    <property type="term" value="C:synaptic vesicle"/>
    <property type="evidence" value="ECO:0007669"/>
    <property type="project" value="TreeGrafter"/>
</dbReference>
<dbReference type="GO" id="GO:0008083">
    <property type="term" value="F:growth factor activity"/>
    <property type="evidence" value="ECO:0007669"/>
    <property type="project" value="UniProtKB-KW"/>
</dbReference>
<dbReference type="GO" id="GO:0008289">
    <property type="term" value="F:lipid binding"/>
    <property type="evidence" value="ECO:0007669"/>
    <property type="project" value="UniProtKB-KW"/>
</dbReference>
<dbReference type="GO" id="GO:0008191">
    <property type="term" value="F:metalloendopeptidase inhibitor activity"/>
    <property type="evidence" value="ECO:0000250"/>
    <property type="project" value="UniProtKB"/>
</dbReference>
<dbReference type="GO" id="GO:0005163">
    <property type="term" value="F:nerve growth factor receptor binding"/>
    <property type="evidence" value="ECO:0007669"/>
    <property type="project" value="TreeGrafter"/>
</dbReference>
<dbReference type="GO" id="GO:0090729">
    <property type="term" value="F:toxin activity"/>
    <property type="evidence" value="ECO:0007669"/>
    <property type="project" value="UniProtKB-KW"/>
</dbReference>
<dbReference type="GO" id="GO:0007169">
    <property type="term" value="P:cell surface receptor protein tyrosine kinase signaling pathway"/>
    <property type="evidence" value="ECO:0007669"/>
    <property type="project" value="TreeGrafter"/>
</dbReference>
<dbReference type="GO" id="GO:0050804">
    <property type="term" value="P:modulation of chemical synaptic transmission"/>
    <property type="evidence" value="ECO:0007669"/>
    <property type="project" value="TreeGrafter"/>
</dbReference>
<dbReference type="GO" id="GO:0043524">
    <property type="term" value="P:negative regulation of neuron apoptotic process"/>
    <property type="evidence" value="ECO:0007669"/>
    <property type="project" value="TreeGrafter"/>
</dbReference>
<dbReference type="GO" id="GO:0021675">
    <property type="term" value="P:nerve development"/>
    <property type="evidence" value="ECO:0007669"/>
    <property type="project" value="TreeGrafter"/>
</dbReference>
<dbReference type="GO" id="GO:0038180">
    <property type="term" value="P:nerve growth factor signaling pathway"/>
    <property type="evidence" value="ECO:0007669"/>
    <property type="project" value="TreeGrafter"/>
</dbReference>
<dbReference type="GO" id="GO:0048812">
    <property type="term" value="P:neuron projection morphogenesis"/>
    <property type="evidence" value="ECO:0007669"/>
    <property type="project" value="TreeGrafter"/>
</dbReference>
<dbReference type="FunFam" id="2.10.90.10:FF:000002">
    <property type="entry name" value="Brain-derived neurotrophic factor"/>
    <property type="match status" value="1"/>
</dbReference>
<dbReference type="Gene3D" id="2.10.90.10">
    <property type="entry name" value="Cystine-knot cytokines"/>
    <property type="match status" value="1"/>
</dbReference>
<dbReference type="InterPro" id="IPR029034">
    <property type="entry name" value="Cystine-knot_cytokine"/>
</dbReference>
<dbReference type="InterPro" id="IPR020408">
    <property type="entry name" value="Nerve_growth_factor-like"/>
</dbReference>
<dbReference type="InterPro" id="IPR002072">
    <property type="entry name" value="Nerve_growth_factor-rel"/>
</dbReference>
<dbReference type="InterPro" id="IPR020425">
    <property type="entry name" value="Nerve_growth_factor_bsu"/>
</dbReference>
<dbReference type="InterPro" id="IPR019846">
    <property type="entry name" value="Nerve_growth_factor_CS"/>
</dbReference>
<dbReference type="InterPro" id="IPR020433">
    <property type="entry name" value="Venom_nerve_growth_factor"/>
</dbReference>
<dbReference type="PANTHER" id="PTHR11589:SF10">
    <property type="entry name" value="BETA-NERVE GROWTH FACTOR"/>
    <property type="match status" value="1"/>
</dbReference>
<dbReference type="PANTHER" id="PTHR11589">
    <property type="entry name" value="NERVE GROWTH FACTOR NGF -RELATED"/>
    <property type="match status" value="1"/>
</dbReference>
<dbReference type="Pfam" id="PF00243">
    <property type="entry name" value="NGF"/>
    <property type="match status" value="1"/>
</dbReference>
<dbReference type="PIRSF" id="PIRSF001789">
    <property type="entry name" value="NGF"/>
    <property type="match status" value="1"/>
</dbReference>
<dbReference type="PRINTS" id="PR00268">
    <property type="entry name" value="NGF"/>
</dbReference>
<dbReference type="PRINTS" id="PR01913">
    <property type="entry name" value="NGFBETA"/>
</dbReference>
<dbReference type="PRINTS" id="PR01917">
    <property type="entry name" value="VENOMNGF"/>
</dbReference>
<dbReference type="SMART" id="SM00140">
    <property type="entry name" value="NGF"/>
    <property type="match status" value="1"/>
</dbReference>
<dbReference type="SUPFAM" id="SSF57501">
    <property type="entry name" value="Cystine-knot cytokines"/>
    <property type="match status" value="1"/>
</dbReference>
<dbReference type="PROSITE" id="PS00248">
    <property type="entry name" value="NGF_1"/>
    <property type="match status" value="1"/>
</dbReference>
<dbReference type="PROSITE" id="PS50270">
    <property type="entry name" value="NGF_2"/>
    <property type="match status" value="1"/>
</dbReference>
<sequence length="241" mass="27162">MSMLCYTLIITLLIGIWAAPKSEDNVPLGSPATSDLSVTSCTKTHEALKTSRNTDQHYPAPKKEEDQEFGSAANIIVDPKLFQKRRFQSPRVLFSTQPPPLSRDEQSVDDANSLNRNIRAKREDHPVHNRGEYSVCDSVNVWVANKTTATDIRGNVVTVMVDVNINNNVYKQYFFETKCRNPNPVPTGCRGIDARHWNSYCTTTNTFVKALTMEGNQASWRFIRIDTACVCVISRKNENFG</sequence>
<feature type="signal peptide" evidence="4">
    <location>
        <begin position="1"/>
        <end position="18"/>
    </location>
</feature>
<feature type="propeptide" id="PRO_0000043282" evidence="1">
    <location>
        <begin position="19"/>
        <end position="122"/>
    </location>
</feature>
<feature type="chain" id="PRO_0000043283" description="Venom nerve growth factor">
    <location>
        <begin position="123"/>
        <end position="241"/>
    </location>
</feature>
<feature type="region of interest" description="Disordered" evidence="5">
    <location>
        <begin position="47"/>
        <end position="69"/>
    </location>
</feature>
<feature type="compositionally biased region" description="Basic and acidic residues" evidence="5">
    <location>
        <begin position="47"/>
        <end position="65"/>
    </location>
</feature>
<feature type="glycosylation site" description="N-linked (GlcNAc...) asparagine" evidence="4">
    <location>
        <position position="145"/>
    </location>
</feature>
<feature type="disulfide bond" evidence="2">
    <location>
        <begin position="136"/>
        <end position="201"/>
    </location>
</feature>
<feature type="disulfide bond" evidence="2">
    <location>
        <begin position="179"/>
        <end position="229"/>
    </location>
</feature>
<feature type="disulfide bond" evidence="2">
    <location>
        <begin position="189"/>
        <end position="231"/>
    </location>
</feature>
<comment type="function">
    <text evidence="2 3">Nerve growth factor is important for the development and maintenance of the sympathetic and sensory nervous systems. It stimulates division and differentiation of sympathetic and embryonic sensory neurons as well as basal forebrain cholinergic neurons in the brain. Its relevance in the snake venom is not clear. However, it has been shown to inhibit metalloproteinase-dependent proteolysis of platelet glycoprotein Ib alpha, suggesting a metalloproteinase inhibition to prevent metalloprotease autodigestion and/or protection against prey proteases (By similarity). Binds a lipid between the two protein chains in the homodimer. The lipid-bound form promotes histamine relase from mouse mast cells, contrary to the lipid-free form (By similarity).</text>
</comment>
<comment type="subunit">
    <text evidence="2">Homodimer; non-covalently linked.</text>
</comment>
<comment type="subcellular location">
    <subcellularLocation>
        <location evidence="2">Secreted</location>
    </subcellularLocation>
</comment>
<comment type="tissue specificity">
    <text>Expressed by the venom gland.</text>
</comment>
<comment type="similarity">
    <text evidence="6">Belongs to the NGF-beta family.</text>
</comment>